<evidence type="ECO:0000255" key="1">
    <source>
        <dbReference type="HAMAP-Rule" id="MF_01333"/>
    </source>
</evidence>
<evidence type="ECO:0000305" key="2"/>
<dbReference type="EMBL" id="CP001337">
    <property type="protein sequence ID" value="ACL25872.1"/>
    <property type="molecule type" value="Genomic_DNA"/>
</dbReference>
<dbReference type="RefSeq" id="WP_015941726.1">
    <property type="nucleotide sequence ID" value="NC_011831.1"/>
</dbReference>
<dbReference type="SMR" id="B8G6R3"/>
<dbReference type="STRING" id="326427.Cagg_3012"/>
<dbReference type="KEGG" id="cag:Cagg_3012"/>
<dbReference type="eggNOG" id="COG0094">
    <property type="taxonomic scope" value="Bacteria"/>
</dbReference>
<dbReference type="HOGENOM" id="CLU_061015_2_1_0"/>
<dbReference type="OrthoDB" id="9806626at2"/>
<dbReference type="Proteomes" id="UP000002508">
    <property type="component" value="Chromosome"/>
</dbReference>
<dbReference type="GO" id="GO:1990904">
    <property type="term" value="C:ribonucleoprotein complex"/>
    <property type="evidence" value="ECO:0007669"/>
    <property type="project" value="UniProtKB-KW"/>
</dbReference>
<dbReference type="GO" id="GO:0005840">
    <property type="term" value="C:ribosome"/>
    <property type="evidence" value="ECO:0007669"/>
    <property type="project" value="UniProtKB-KW"/>
</dbReference>
<dbReference type="GO" id="GO:0019843">
    <property type="term" value="F:rRNA binding"/>
    <property type="evidence" value="ECO:0007669"/>
    <property type="project" value="UniProtKB-UniRule"/>
</dbReference>
<dbReference type="GO" id="GO:0003735">
    <property type="term" value="F:structural constituent of ribosome"/>
    <property type="evidence" value="ECO:0007669"/>
    <property type="project" value="InterPro"/>
</dbReference>
<dbReference type="GO" id="GO:0000049">
    <property type="term" value="F:tRNA binding"/>
    <property type="evidence" value="ECO:0007669"/>
    <property type="project" value="UniProtKB-UniRule"/>
</dbReference>
<dbReference type="GO" id="GO:0006412">
    <property type="term" value="P:translation"/>
    <property type="evidence" value="ECO:0007669"/>
    <property type="project" value="UniProtKB-UniRule"/>
</dbReference>
<dbReference type="FunFam" id="3.30.1440.10:FF:000001">
    <property type="entry name" value="50S ribosomal protein L5"/>
    <property type="match status" value="1"/>
</dbReference>
<dbReference type="Gene3D" id="3.30.1440.10">
    <property type="match status" value="1"/>
</dbReference>
<dbReference type="HAMAP" id="MF_01333_B">
    <property type="entry name" value="Ribosomal_uL5_B"/>
    <property type="match status" value="1"/>
</dbReference>
<dbReference type="InterPro" id="IPR002132">
    <property type="entry name" value="Ribosomal_uL5"/>
</dbReference>
<dbReference type="InterPro" id="IPR020930">
    <property type="entry name" value="Ribosomal_uL5_bac-type"/>
</dbReference>
<dbReference type="InterPro" id="IPR031309">
    <property type="entry name" value="Ribosomal_uL5_C"/>
</dbReference>
<dbReference type="InterPro" id="IPR020929">
    <property type="entry name" value="Ribosomal_uL5_CS"/>
</dbReference>
<dbReference type="InterPro" id="IPR022803">
    <property type="entry name" value="Ribosomal_uL5_dom_sf"/>
</dbReference>
<dbReference type="InterPro" id="IPR031310">
    <property type="entry name" value="Ribosomal_uL5_N"/>
</dbReference>
<dbReference type="NCBIfam" id="NF000585">
    <property type="entry name" value="PRK00010.1"/>
    <property type="match status" value="1"/>
</dbReference>
<dbReference type="PANTHER" id="PTHR11994">
    <property type="entry name" value="60S RIBOSOMAL PROTEIN L11-RELATED"/>
    <property type="match status" value="1"/>
</dbReference>
<dbReference type="Pfam" id="PF00281">
    <property type="entry name" value="Ribosomal_L5"/>
    <property type="match status" value="1"/>
</dbReference>
<dbReference type="Pfam" id="PF00673">
    <property type="entry name" value="Ribosomal_L5_C"/>
    <property type="match status" value="1"/>
</dbReference>
<dbReference type="PIRSF" id="PIRSF002161">
    <property type="entry name" value="Ribosomal_L5"/>
    <property type="match status" value="1"/>
</dbReference>
<dbReference type="SUPFAM" id="SSF55282">
    <property type="entry name" value="RL5-like"/>
    <property type="match status" value="1"/>
</dbReference>
<dbReference type="PROSITE" id="PS00358">
    <property type="entry name" value="RIBOSOMAL_L5"/>
    <property type="match status" value="1"/>
</dbReference>
<organism>
    <name type="scientific">Chloroflexus aggregans (strain MD-66 / DSM 9485)</name>
    <dbReference type="NCBI Taxonomy" id="326427"/>
    <lineage>
        <taxon>Bacteria</taxon>
        <taxon>Bacillati</taxon>
        <taxon>Chloroflexota</taxon>
        <taxon>Chloroflexia</taxon>
        <taxon>Chloroflexales</taxon>
        <taxon>Chloroflexineae</taxon>
        <taxon>Chloroflexaceae</taxon>
        <taxon>Chloroflexus</taxon>
    </lineage>
</organism>
<reference key="1">
    <citation type="submission" date="2008-12" db="EMBL/GenBank/DDBJ databases">
        <title>Complete sequence of Chloroflexus aggregans DSM 9485.</title>
        <authorList>
            <consortium name="US DOE Joint Genome Institute"/>
            <person name="Lucas S."/>
            <person name="Copeland A."/>
            <person name="Lapidus A."/>
            <person name="Glavina del Rio T."/>
            <person name="Dalin E."/>
            <person name="Tice H."/>
            <person name="Pitluck S."/>
            <person name="Foster B."/>
            <person name="Larimer F."/>
            <person name="Land M."/>
            <person name="Hauser L."/>
            <person name="Kyrpides N."/>
            <person name="Mikhailova N."/>
            <person name="Bryant D.A."/>
            <person name="Richardson P."/>
        </authorList>
    </citation>
    <scope>NUCLEOTIDE SEQUENCE [LARGE SCALE GENOMIC DNA]</scope>
    <source>
        <strain>MD-66 / DSM 9485</strain>
    </source>
</reference>
<gene>
    <name evidence="1" type="primary">rplE</name>
    <name type="ordered locus">Cagg_3012</name>
</gene>
<accession>B8G6R3</accession>
<sequence>MTVRLREKYYKEVVPALMEEFKFKSIMQVPRLVKIVVNVGVGEAVQNAKAIEAAVNDVAAITGQKPVVTRAKKSVASFKLRAGMPIGVMVTLRGDRMYDFLDRLCSLALPRIRDFRGVSRSSFDGRGNYSIGLKEQIVFPDIDYDKIDKIRGLEVAIVTSAPNDEQAYSLLKRLGMPFRD</sequence>
<proteinExistence type="inferred from homology"/>
<protein>
    <recommendedName>
        <fullName evidence="1">Large ribosomal subunit protein uL5</fullName>
    </recommendedName>
    <alternativeName>
        <fullName evidence="2">50S ribosomal protein L5</fullName>
    </alternativeName>
</protein>
<feature type="chain" id="PRO_1000166121" description="Large ribosomal subunit protein uL5">
    <location>
        <begin position="1"/>
        <end position="180"/>
    </location>
</feature>
<keyword id="KW-0687">Ribonucleoprotein</keyword>
<keyword id="KW-0689">Ribosomal protein</keyword>
<keyword id="KW-0694">RNA-binding</keyword>
<keyword id="KW-0699">rRNA-binding</keyword>
<keyword id="KW-0820">tRNA-binding</keyword>
<comment type="function">
    <text evidence="1">This is one of the proteins that bind and probably mediate the attachment of the 5S RNA into the large ribosomal subunit, where it forms part of the central protuberance. In the 70S ribosome it contacts protein S13 of the 30S subunit (bridge B1b), connecting the 2 subunits; this bridge is implicated in subunit movement. Contacts the P site tRNA; the 5S rRNA and some of its associated proteins might help stabilize positioning of ribosome-bound tRNAs.</text>
</comment>
<comment type="subunit">
    <text evidence="1">Part of the 50S ribosomal subunit; part of the 5S rRNA/L5/L18/L25 subcomplex. Contacts the 5S rRNA and the P site tRNA. Forms a bridge to the 30S subunit in the 70S ribosome.</text>
</comment>
<comment type="similarity">
    <text evidence="1">Belongs to the universal ribosomal protein uL5 family.</text>
</comment>
<name>RL5_CHLAD</name>